<dbReference type="EMBL" id="AM406670">
    <property type="protein sequence ID" value="CAL96038.1"/>
    <property type="molecule type" value="Genomic_DNA"/>
</dbReference>
<dbReference type="RefSeq" id="WP_011767145.1">
    <property type="nucleotide sequence ID" value="NC_008702.1"/>
</dbReference>
<dbReference type="SMR" id="A1KB32"/>
<dbReference type="STRING" id="62928.azo3422"/>
<dbReference type="KEGG" id="azo:azo3422"/>
<dbReference type="eggNOG" id="COG0048">
    <property type="taxonomic scope" value="Bacteria"/>
</dbReference>
<dbReference type="HOGENOM" id="CLU_104295_1_2_4"/>
<dbReference type="OrthoDB" id="9802366at2"/>
<dbReference type="Proteomes" id="UP000002588">
    <property type="component" value="Chromosome"/>
</dbReference>
<dbReference type="GO" id="GO:0015935">
    <property type="term" value="C:small ribosomal subunit"/>
    <property type="evidence" value="ECO:0007669"/>
    <property type="project" value="InterPro"/>
</dbReference>
<dbReference type="GO" id="GO:0019843">
    <property type="term" value="F:rRNA binding"/>
    <property type="evidence" value="ECO:0007669"/>
    <property type="project" value="UniProtKB-UniRule"/>
</dbReference>
<dbReference type="GO" id="GO:0003735">
    <property type="term" value="F:structural constituent of ribosome"/>
    <property type="evidence" value="ECO:0007669"/>
    <property type="project" value="InterPro"/>
</dbReference>
<dbReference type="GO" id="GO:0000049">
    <property type="term" value="F:tRNA binding"/>
    <property type="evidence" value="ECO:0007669"/>
    <property type="project" value="UniProtKB-UniRule"/>
</dbReference>
<dbReference type="GO" id="GO:0006412">
    <property type="term" value="P:translation"/>
    <property type="evidence" value="ECO:0007669"/>
    <property type="project" value="UniProtKB-UniRule"/>
</dbReference>
<dbReference type="CDD" id="cd03368">
    <property type="entry name" value="Ribosomal_S12"/>
    <property type="match status" value="1"/>
</dbReference>
<dbReference type="FunFam" id="2.40.50.140:FF:000001">
    <property type="entry name" value="30S ribosomal protein S12"/>
    <property type="match status" value="1"/>
</dbReference>
<dbReference type="Gene3D" id="2.40.50.140">
    <property type="entry name" value="Nucleic acid-binding proteins"/>
    <property type="match status" value="1"/>
</dbReference>
<dbReference type="HAMAP" id="MF_00403_B">
    <property type="entry name" value="Ribosomal_uS12_B"/>
    <property type="match status" value="1"/>
</dbReference>
<dbReference type="InterPro" id="IPR012340">
    <property type="entry name" value="NA-bd_OB-fold"/>
</dbReference>
<dbReference type="InterPro" id="IPR006032">
    <property type="entry name" value="Ribosomal_uS12"/>
</dbReference>
<dbReference type="InterPro" id="IPR005679">
    <property type="entry name" value="Ribosomal_uS12_bac"/>
</dbReference>
<dbReference type="NCBIfam" id="TIGR00981">
    <property type="entry name" value="rpsL_bact"/>
    <property type="match status" value="1"/>
</dbReference>
<dbReference type="PANTHER" id="PTHR11652">
    <property type="entry name" value="30S RIBOSOMAL PROTEIN S12 FAMILY MEMBER"/>
    <property type="match status" value="1"/>
</dbReference>
<dbReference type="Pfam" id="PF00164">
    <property type="entry name" value="Ribosom_S12_S23"/>
    <property type="match status" value="1"/>
</dbReference>
<dbReference type="PIRSF" id="PIRSF002133">
    <property type="entry name" value="Ribosomal_S12/S23"/>
    <property type="match status" value="1"/>
</dbReference>
<dbReference type="PRINTS" id="PR01034">
    <property type="entry name" value="RIBOSOMALS12"/>
</dbReference>
<dbReference type="SUPFAM" id="SSF50249">
    <property type="entry name" value="Nucleic acid-binding proteins"/>
    <property type="match status" value="1"/>
</dbReference>
<dbReference type="PROSITE" id="PS00055">
    <property type="entry name" value="RIBOSOMAL_S12"/>
    <property type="match status" value="1"/>
</dbReference>
<name>RS12_AZOSB</name>
<sequence>MPTINQLVRKPRQMDVVKSKVPALEACPQKRGVCTRVYTTTPKKPNSALRKVAKVRLTNGFEVISYIGGEGHNLQEHSVVLIRGGRVKDLPGVRYHIVRGSLDLQGVKDRKQSRSKYGAKRPKKA</sequence>
<protein>
    <recommendedName>
        <fullName evidence="2">Small ribosomal subunit protein uS12</fullName>
    </recommendedName>
    <alternativeName>
        <fullName evidence="4">30S ribosomal protein S12</fullName>
    </alternativeName>
</protein>
<proteinExistence type="inferred from homology"/>
<feature type="chain" id="PRO_0000295953" description="Small ribosomal subunit protein uS12">
    <location>
        <begin position="1"/>
        <end position="125"/>
    </location>
</feature>
<feature type="region of interest" description="Disordered" evidence="3">
    <location>
        <begin position="106"/>
        <end position="125"/>
    </location>
</feature>
<feature type="compositionally biased region" description="Basic residues" evidence="3">
    <location>
        <begin position="113"/>
        <end position="125"/>
    </location>
</feature>
<feature type="modified residue" description="3-methylthioaspartic acid" evidence="1">
    <location>
        <position position="89"/>
    </location>
</feature>
<organism>
    <name type="scientific">Azoarcus sp. (strain BH72)</name>
    <dbReference type="NCBI Taxonomy" id="418699"/>
    <lineage>
        <taxon>Bacteria</taxon>
        <taxon>Pseudomonadati</taxon>
        <taxon>Pseudomonadota</taxon>
        <taxon>Betaproteobacteria</taxon>
        <taxon>Rhodocyclales</taxon>
        <taxon>Zoogloeaceae</taxon>
        <taxon>Azoarcus</taxon>
    </lineage>
</organism>
<reference key="1">
    <citation type="journal article" date="2006" name="Nat. Biotechnol.">
        <title>Complete genome of the mutualistic, N2-fixing grass endophyte Azoarcus sp. strain BH72.</title>
        <authorList>
            <person name="Krause A."/>
            <person name="Ramakumar A."/>
            <person name="Bartels D."/>
            <person name="Battistoni F."/>
            <person name="Bekel T."/>
            <person name="Boch J."/>
            <person name="Boehm M."/>
            <person name="Friedrich F."/>
            <person name="Hurek T."/>
            <person name="Krause L."/>
            <person name="Linke B."/>
            <person name="McHardy A.C."/>
            <person name="Sarkar A."/>
            <person name="Schneiker S."/>
            <person name="Syed A.A."/>
            <person name="Thauer R."/>
            <person name="Vorhoelter F.-J."/>
            <person name="Weidner S."/>
            <person name="Puehler A."/>
            <person name="Reinhold-Hurek B."/>
            <person name="Kaiser O."/>
            <person name="Goesmann A."/>
        </authorList>
    </citation>
    <scope>NUCLEOTIDE SEQUENCE [LARGE SCALE GENOMIC DNA]</scope>
    <source>
        <strain>BH72</strain>
    </source>
</reference>
<gene>
    <name evidence="2" type="primary">rpsL</name>
    <name type="ordered locus">azo3422</name>
</gene>
<accession>A1KB32</accession>
<evidence type="ECO:0000250" key="1"/>
<evidence type="ECO:0000255" key="2">
    <source>
        <dbReference type="HAMAP-Rule" id="MF_00403"/>
    </source>
</evidence>
<evidence type="ECO:0000256" key="3">
    <source>
        <dbReference type="SAM" id="MobiDB-lite"/>
    </source>
</evidence>
<evidence type="ECO:0000305" key="4"/>
<keyword id="KW-0488">Methylation</keyword>
<keyword id="KW-1185">Reference proteome</keyword>
<keyword id="KW-0687">Ribonucleoprotein</keyword>
<keyword id="KW-0689">Ribosomal protein</keyword>
<keyword id="KW-0694">RNA-binding</keyword>
<keyword id="KW-0699">rRNA-binding</keyword>
<keyword id="KW-0820">tRNA-binding</keyword>
<comment type="function">
    <text evidence="2">With S4 and S5 plays an important role in translational accuracy.</text>
</comment>
<comment type="function">
    <text evidence="2">Interacts with and stabilizes bases of the 16S rRNA that are involved in tRNA selection in the A site and with the mRNA backbone. Located at the interface of the 30S and 50S subunits, it traverses the body of the 30S subunit contacting proteins on the other side and probably holding the rRNA structure together. The combined cluster of proteins S8, S12 and S17 appears to hold together the shoulder and platform of the 30S subunit.</text>
</comment>
<comment type="subunit">
    <text evidence="2">Part of the 30S ribosomal subunit. Contacts proteins S8 and S17. May interact with IF1 in the 30S initiation complex.</text>
</comment>
<comment type="similarity">
    <text evidence="2">Belongs to the universal ribosomal protein uS12 family.</text>
</comment>